<proteinExistence type="predicted"/>
<sequence length="432" mass="51082">MWRGVGMVVQQFINRIRNCPLARDIIKKFFIPVIKERKNIEKEVEDILKVLRKNYCSGEYANKDCICAWFKFFEDVGRLHEALELKAFWEIIFPNHLNDLSESLQLFISNYAYMRPFGSSYSSIRVRIHGFIGAVCIDRNFNLHNNTWISNICNCYENNLRMLGLGFYTSDTLDPRYNINPSCNINSTTTNKCGLLYIISNTQITASLVSYLLNLLRNGNIYDAYNFLIRIRGVGDKIACLFLRDISIIHNLMLYGDCRDLLYKPIDRVVKKVIEELVKCKCKLNYNFDINEVLEKFDYTECRCIQKLRKNAKIDSNDFKTLYPYKIFLYEYSKKCKLDQRYVEMGMWFFNSKVAKYYNRRLCKYTIQEACKDLIKRLRKAINNTNIRYIGNNQFEININGKIIIVSEDELIDLILKGEIEIYDELLDIIFF</sequence>
<feature type="chain" id="PRO_0000107509" description="Uncharacterized protein MJECL21">
    <location>
        <begin position="1"/>
        <end position="432"/>
    </location>
</feature>
<dbReference type="EMBL" id="L77118">
    <property type="protein sequence ID" value="AAC37092.1"/>
    <property type="molecule type" value="Genomic_DNA"/>
</dbReference>
<dbReference type="PIR" id="D64512">
    <property type="entry name" value="D64512"/>
</dbReference>
<dbReference type="PaxDb" id="243232-MJ_ECL21"/>
<dbReference type="EnsemblBacteria" id="AAC37092">
    <property type="protein sequence ID" value="AAC37092"/>
    <property type="gene ID" value="MJ_ECL21"/>
</dbReference>
<dbReference type="KEGG" id="mja:MJ_ECL21"/>
<dbReference type="HOGENOM" id="CLU_634033_0_0_2"/>
<dbReference type="InParanoid" id="Q60281"/>
<dbReference type="OrthoDB" id="387709at2157"/>
<dbReference type="Proteomes" id="UP000000805">
    <property type="component" value="Plasmid pDSM2661_1"/>
</dbReference>
<keyword id="KW-0614">Plasmid</keyword>
<keyword id="KW-1185">Reference proteome</keyword>
<protein>
    <recommendedName>
        <fullName>Uncharacterized protein MJECL21</fullName>
    </recommendedName>
</protein>
<gene>
    <name type="ordered locus">MJECL21</name>
</gene>
<organism>
    <name type="scientific">Methanocaldococcus jannaschii (strain ATCC 43067 / DSM 2661 / JAL-1 / JCM 10045 / NBRC 100440)</name>
    <name type="common">Methanococcus jannaschii</name>
    <dbReference type="NCBI Taxonomy" id="243232"/>
    <lineage>
        <taxon>Archaea</taxon>
        <taxon>Methanobacteriati</taxon>
        <taxon>Methanobacteriota</taxon>
        <taxon>Methanomada group</taxon>
        <taxon>Methanococci</taxon>
        <taxon>Methanococcales</taxon>
        <taxon>Methanocaldococcaceae</taxon>
        <taxon>Methanocaldococcus</taxon>
    </lineage>
</organism>
<reference key="1">
    <citation type="journal article" date="1996" name="Science">
        <title>Complete genome sequence of the methanogenic archaeon, Methanococcus jannaschii.</title>
        <authorList>
            <person name="Bult C.J."/>
            <person name="White O."/>
            <person name="Olsen G.J."/>
            <person name="Zhou L."/>
            <person name="Fleischmann R.D."/>
            <person name="Sutton G.G."/>
            <person name="Blake J.A."/>
            <person name="FitzGerald L.M."/>
            <person name="Clayton R.A."/>
            <person name="Gocayne J.D."/>
            <person name="Kerlavage A.R."/>
            <person name="Dougherty B.A."/>
            <person name="Tomb J.-F."/>
            <person name="Adams M.D."/>
            <person name="Reich C.I."/>
            <person name="Overbeek R."/>
            <person name="Kirkness E.F."/>
            <person name="Weinstock K.G."/>
            <person name="Merrick J.M."/>
            <person name="Glodek A."/>
            <person name="Scott J.L."/>
            <person name="Geoghagen N.S.M."/>
            <person name="Weidman J.F."/>
            <person name="Fuhrmann J.L."/>
            <person name="Nguyen D."/>
            <person name="Utterback T.R."/>
            <person name="Kelley J.M."/>
            <person name="Peterson J.D."/>
            <person name="Sadow P.W."/>
            <person name="Hanna M.C."/>
            <person name="Cotton M.D."/>
            <person name="Roberts K.M."/>
            <person name="Hurst M.A."/>
            <person name="Kaine B.P."/>
            <person name="Borodovsky M."/>
            <person name="Klenk H.-P."/>
            <person name="Fraser C.M."/>
            <person name="Smith H.O."/>
            <person name="Woese C.R."/>
            <person name="Venter J.C."/>
        </authorList>
    </citation>
    <scope>NUCLEOTIDE SEQUENCE [LARGE SCALE GENOMIC DNA]</scope>
    <source>
        <strain>ATCC 43067 / DSM 2661 / JAL-1 / JCM 10045 / NBRC 100440</strain>
    </source>
</reference>
<name>Y3521_METJA</name>
<accession>Q60281</accession>
<geneLocation type="plasmid">
    <name>large ECE</name>
</geneLocation>